<comment type="function">
    <text evidence="1">Catalyzes the specific phosphorylation of arginine residues in proteins.</text>
</comment>
<comment type="catalytic activity">
    <reaction evidence="1">
        <text>L-arginyl-[protein] + ATP = N(omega)-phospho-L-arginyl-[protein] + ADP + H(+)</text>
        <dbReference type="Rhea" id="RHEA:43384"/>
        <dbReference type="Rhea" id="RHEA-COMP:10532"/>
        <dbReference type="Rhea" id="RHEA-COMP:10533"/>
        <dbReference type="ChEBI" id="CHEBI:15378"/>
        <dbReference type="ChEBI" id="CHEBI:29965"/>
        <dbReference type="ChEBI" id="CHEBI:30616"/>
        <dbReference type="ChEBI" id="CHEBI:83226"/>
        <dbReference type="ChEBI" id="CHEBI:456216"/>
        <dbReference type="EC" id="2.7.14.1"/>
    </reaction>
</comment>
<comment type="activity regulation">
    <text evidence="1">Appears to be allosterically activated by the binding of pArg-containing polypeptides to the pArg-binding pocket localized in the C-terminal domain of McsB.</text>
</comment>
<comment type="similarity">
    <text evidence="1">Belongs to the ATP:guanido phosphotransferase family.</text>
</comment>
<evidence type="ECO:0000255" key="1">
    <source>
        <dbReference type="HAMAP-Rule" id="MF_00602"/>
    </source>
</evidence>
<dbReference type="EC" id="2.7.14.1" evidence="1"/>
<dbReference type="EMBL" id="CP000232">
    <property type="protein sequence ID" value="ABC18499.1"/>
    <property type="molecule type" value="Genomic_DNA"/>
</dbReference>
<dbReference type="RefSeq" id="YP_429042.1">
    <property type="nucleotide sequence ID" value="NC_007644.1"/>
</dbReference>
<dbReference type="SMR" id="Q2RM40"/>
<dbReference type="STRING" id="264732.Moth_0161"/>
<dbReference type="EnsemblBacteria" id="ABC18499">
    <property type="protein sequence ID" value="ABC18499"/>
    <property type="gene ID" value="Moth_0161"/>
</dbReference>
<dbReference type="KEGG" id="mta:Moth_0161"/>
<dbReference type="PATRIC" id="fig|264732.11.peg.172"/>
<dbReference type="eggNOG" id="COG3869">
    <property type="taxonomic scope" value="Bacteria"/>
</dbReference>
<dbReference type="HOGENOM" id="CLU_066591_1_0_9"/>
<dbReference type="OrthoDB" id="9791353at2"/>
<dbReference type="GO" id="GO:0005615">
    <property type="term" value="C:extracellular space"/>
    <property type="evidence" value="ECO:0007669"/>
    <property type="project" value="TreeGrafter"/>
</dbReference>
<dbReference type="GO" id="GO:0005524">
    <property type="term" value="F:ATP binding"/>
    <property type="evidence" value="ECO:0007669"/>
    <property type="project" value="UniProtKB-KW"/>
</dbReference>
<dbReference type="GO" id="GO:0004111">
    <property type="term" value="F:creatine kinase activity"/>
    <property type="evidence" value="ECO:0007669"/>
    <property type="project" value="InterPro"/>
</dbReference>
<dbReference type="GO" id="GO:0004672">
    <property type="term" value="F:protein kinase activity"/>
    <property type="evidence" value="ECO:0007669"/>
    <property type="project" value="UniProtKB-UniRule"/>
</dbReference>
<dbReference type="GO" id="GO:0046314">
    <property type="term" value="P:phosphocreatine biosynthetic process"/>
    <property type="evidence" value="ECO:0007669"/>
    <property type="project" value="InterPro"/>
</dbReference>
<dbReference type="CDD" id="cd07930">
    <property type="entry name" value="bacterial_phosphagen_kinase"/>
    <property type="match status" value="1"/>
</dbReference>
<dbReference type="Gene3D" id="3.30.590.10">
    <property type="entry name" value="Glutamine synthetase/guanido kinase, catalytic domain"/>
    <property type="match status" value="1"/>
</dbReference>
<dbReference type="HAMAP" id="MF_00602">
    <property type="entry name" value="Prot_Arg_kinase"/>
    <property type="match status" value="1"/>
</dbReference>
<dbReference type="InterPro" id="IPR023660">
    <property type="entry name" value="Arg_Kinase"/>
</dbReference>
<dbReference type="InterPro" id="IPR000749">
    <property type="entry name" value="ATP-guanido_PTrfase"/>
</dbReference>
<dbReference type="InterPro" id="IPR022415">
    <property type="entry name" value="ATP-guanido_PTrfase_AS"/>
</dbReference>
<dbReference type="InterPro" id="IPR022414">
    <property type="entry name" value="ATP-guanido_PTrfase_cat"/>
</dbReference>
<dbReference type="InterPro" id="IPR014746">
    <property type="entry name" value="Gln_synth/guanido_kin_cat_dom"/>
</dbReference>
<dbReference type="NCBIfam" id="NF002194">
    <property type="entry name" value="PRK01059.1-4"/>
    <property type="match status" value="1"/>
</dbReference>
<dbReference type="PANTHER" id="PTHR11547:SF38">
    <property type="entry name" value="ARGININE KINASE 1-RELATED"/>
    <property type="match status" value="1"/>
</dbReference>
<dbReference type="PANTHER" id="PTHR11547">
    <property type="entry name" value="ARGININE OR CREATINE KINASE"/>
    <property type="match status" value="1"/>
</dbReference>
<dbReference type="Pfam" id="PF00217">
    <property type="entry name" value="ATP-gua_Ptrans"/>
    <property type="match status" value="1"/>
</dbReference>
<dbReference type="SUPFAM" id="SSF55931">
    <property type="entry name" value="Glutamine synthetase/guanido kinase"/>
    <property type="match status" value="1"/>
</dbReference>
<dbReference type="PROSITE" id="PS00112">
    <property type="entry name" value="PHOSPHAGEN_KINASE"/>
    <property type="match status" value="1"/>
</dbReference>
<dbReference type="PROSITE" id="PS51510">
    <property type="entry name" value="PHOSPHAGEN_KINASE_C"/>
    <property type="match status" value="1"/>
</dbReference>
<name>MCSB_MOOTA</name>
<proteinExistence type="inferred from homology"/>
<protein>
    <recommendedName>
        <fullName evidence="1">Protein-arginine kinase</fullName>
        <ecNumber evidence="1">2.7.14.1</ecNumber>
    </recommendedName>
</protein>
<feature type="chain" id="PRO_1000061265" description="Protein-arginine kinase">
    <location>
        <begin position="1"/>
        <end position="350"/>
    </location>
</feature>
<feature type="domain" description="Phosphagen kinase C-terminal" evidence="1">
    <location>
        <begin position="21"/>
        <end position="253"/>
    </location>
</feature>
<feature type="short sequence motif" description="RDXXRA motif of the pArg binding pocket involved in allosteric regulation" evidence="1">
    <location>
        <begin position="336"/>
        <end position="341"/>
    </location>
</feature>
<feature type="binding site" evidence="1">
    <location>
        <begin position="24"/>
        <end position="28"/>
    </location>
    <ligand>
        <name>ATP</name>
        <dbReference type="ChEBI" id="CHEBI:30616"/>
    </ligand>
</feature>
<feature type="binding site" evidence="1">
    <location>
        <position position="90"/>
    </location>
    <ligand>
        <name>ATP</name>
        <dbReference type="ChEBI" id="CHEBI:30616"/>
    </ligand>
</feature>
<feature type="binding site" evidence="1">
    <location>
        <position position="124"/>
    </location>
    <ligand>
        <name>ATP</name>
        <dbReference type="ChEBI" id="CHEBI:30616"/>
    </ligand>
</feature>
<feature type="binding site" evidence="1">
    <location>
        <begin position="175"/>
        <end position="179"/>
    </location>
    <ligand>
        <name>ATP</name>
        <dbReference type="ChEBI" id="CHEBI:30616"/>
    </ligand>
</feature>
<feature type="binding site" evidence="1">
    <location>
        <begin position="206"/>
        <end position="211"/>
    </location>
    <ligand>
        <name>ATP</name>
        <dbReference type="ChEBI" id="CHEBI:30616"/>
    </ligand>
</feature>
<reference key="1">
    <citation type="journal article" date="2008" name="Environ. Microbiol.">
        <title>The complete genome sequence of Moorella thermoacetica (f. Clostridium thermoaceticum).</title>
        <authorList>
            <person name="Pierce E."/>
            <person name="Xie G."/>
            <person name="Barabote R.D."/>
            <person name="Saunders E."/>
            <person name="Han C.S."/>
            <person name="Detter J.C."/>
            <person name="Richardson P."/>
            <person name="Brettin T.S."/>
            <person name="Das A."/>
            <person name="Ljungdahl L.G."/>
            <person name="Ragsdale S.W."/>
        </authorList>
    </citation>
    <scope>NUCLEOTIDE SEQUENCE [LARGE SCALE GENOMIC DNA]</scope>
    <source>
        <strain>ATCC 39073 / JCM 9320</strain>
    </source>
</reference>
<accession>Q2RM40</accession>
<organism>
    <name type="scientific">Moorella thermoacetica (strain ATCC 39073 / JCM 9320)</name>
    <dbReference type="NCBI Taxonomy" id="264732"/>
    <lineage>
        <taxon>Bacteria</taxon>
        <taxon>Bacillati</taxon>
        <taxon>Bacillota</taxon>
        <taxon>Clostridia</taxon>
        <taxon>Moorellales</taxon>
        <taxon>Moorellaceae</taxon>
        <taxon>Moorella</taxon>
    </lineage>
</organism>
<keyword id="KW-0021">Allosteric enzyme</keyword>
<keyword id="KW-0067">ATP-binding</keyword>
<keyword id="KW-0418">Kinase</keyword>
<keyword id="KW-0547">Nucleotide-binding</keyword>
<keyword id="KW-0808">Transferase</keyword>
<gene>
    <name evidence="1" type="primary">mcsB</name>
    <name type="ordered locus">Moth_0161</name>
</gene>
<sequence>MSLNLERNSKWMEGSGPQADIVISSRIRLARNLKGLPFPNLMNSDQQARVVSQVSRAIQAPMVFQAVGELKLQPLRELAPVERQILVEKHLISPDLAAGGGEKAVVLRDDEAVSIMVNEEDHLRLQCLLPAMMLHEAWRLADAADDALENELDFAFDQERGYLTACPTNVGTGLRASTMLHLPALVLTRQAGPVLSALTKVGVAVRGLYGEGTEAQGNIFQVSNQITLGRSEEEIINNLSAVTVRLADQEREARELLRRQSRWQLEDRVGRAYGVLTNARILSSQEALQLLSDVRLGAEMKIIRGLDQRLLNQLMVRIQPAFLQFSAGKEMTPMERDVHRAAMVRELLAG</sequence>